<protein>
    <recommendedName>
        <fullName>Probable cytochrome P450 309a2</fullName>
        <ecNumber>1.14.-.-</ecNumber>
    </recommendedName>
    <alternativeName>
        <fullName>CYPCCCIXA2</fullName>
    </alternativeName>
</protein>
<proteinExistence type="evidence at transcript level"/>
<comment type="function">
    <text evidence="1">May be involved in the metabolism of insect hormones and in the breakdown of synthetic insecticides.</text>
</comment>
<comment type="cofactor">
    <cofactor evidence="1">
        <name>heme</name>
        <dbReference type="ChEBI" id="CHEBI:30413"/>
    </cofactor>
</comment>
<comment type="subcellular location">
    <subcellularLocation>
        <location evidence="2">Endoplasmic reticulum membrane</location>
        <topology evidence="2">Peripheral membrane protein</topology>
    </subcellularLocation>
    <subcellularLocation>
        <location evidence="2">Microsome membrane</location>
        <topology evidence="2">Peripheral membrane protein</topology>
    </subcellularLocation>
</comment>
<comment type="similarity">
    <text evidence="2">Belongs to the cytochrome P450 family.</text>
</comment>
<reference key="1">
    <citation type="journal article" date="2000" name="Science">
        <title>The genome sequence of Drosophila melanogaster.</title>
        <authorList>
            <person name="Adams M.D."/>
            <person name="Celniker S.E."/>
            <person name="Holt R.A."/>
            <person name="Evans C.A."/>
            <person name="Gocayne J.D."/>
            <person name="Amanatides P.G."/>
            <person name="Scherer S.E."/>
            <person name="Li P.W."/>
            <person name="Hoskins R.A."/>
            <person name="Galle R.F."/>
            <person name="George R.A."/>
            <person name="Lewis S.E."/>
            <person name="Richards S."/>
            <person name="Ashburner M."/>
            <person name="Henderson S.N."/>
            <person name="Sutton G.G."/>
            <person name="Wortman J.R."/>
            <person name="Yandell M.D."/>
            <person name="Zhang Q."/>
            <person name="Chen L.X."/>
            <person name="Brandon R.C."/>
            <person name="Rogers Y.-H.C."/>
            <person name="Blazej R.G."/>
            <person name="Champe M."/>
            <person name="Pfeiffer B.D."/>
            <person name="Wan K.H."/>
            <person name="Doyle C."/>
            <person name="Baxter E.G."/>
            <person name="Helt G."/>
            <person name="Nelson C.R."/>
            <person name="Miklos G.L.G."/>
            <person name="Abril J.F."/>
            <person name="Agbayani A."/>
            <person name="An H.-J."/>
            <person name="Andrews-Pfannkoch C."/>
            <person name="Baldwin D."/>
            <person name="Ballew R.M."/>
            <person name="Basu A."/>
            <person name="Baxendale J."/>
            <person name="Bayraktaroglu L."/>
            <person name="Beasley E.M."/>
            <person name="Beeson K.Y."/>
            <person name="Benos P.V."/>
            <person name="Berman B.P."/>
            <person name="Bhandari D."/>
            <person name="Bolshakov S."/>
            <person name="Borkova D."/>
            <person name="Botchan M.R."/>
            <person name="Bouck J."/>
            <person name="Brokstein P."/>
            <person name="Brottier P."/>
            <person name="Burtis K.C."/>
            <person name="Busam D.A."/>
            <person name="Butler H."/>
            <person name="Cadieu E."/>
            <person name="Center A."/>
            <person name="Chandra I."/>
            <person name="Cherry J.M."/>
            <person name="Cawley S."/>
            <person name="Dahlke C."/>
            <person name="Davenport L.B."/>
            <person name="Davies P."/>
            <person name="de Pablos B."/>
            <person name="Delcher A."/>
            <person name="Deng Z."/>
            <person name="Mays A.D."/>
            <person name="Dew I."/>
            <person name="Dietz S.M."/>
            <person name="Dodson K."/>
            <person name="Doup L.E."/>
            <person name="Downes M."/>
            <person name="Dugan-Rocha S."/>
            <person name="Dunkov B.C."/>
            <person name="Dunn P."/>
            <person name="Durbin K.J."/>
            <person name="Evangelista C.C."/>
            <person name="Ferraz C."/>
            <person name="Ferriera S."/>
            <person name="Fleischmann W."/>
            <person name="Fosler C."/>
            <person name="Gabrielian A.E."/>
            <person name="Garg N.S."/>
            <person name="Gelbart W.M."/>
            <person name="Glasser K."/>
            <person name="Glodek A."/>
            <person name="Gong F."/>
            <person name="Gorrell J.H."/>
            <person name="Gu Z."/>
            <person name="Guan P."/>
            <person name="Harris M."/>
            <person name="Harris N.L."/>
            <person name="Harvey D.A."/>
            <person name="Heiman T.J."/>
            <person name="Hernandez J.R."/>
            <person name="Houck J."/>
            <person name="Hostin D."/>
            <person name="Houston K.A."/>
            <person name="Howland T.J."/>
            <person name="Wei M.-H."/>
            <person name="Ibegwam C."/>
            <person name="Jalali M."/>
            <person name="Kalush F."/>
            <person name="Karpen G.H."/>
            <person name="Ke Z."/>
            <person name="Kennison J.A."/>
            <person name="Ketchum K.A."/>
            <person name="Kimmel B.E."/>
            <person name="Kodira C.D."/>
            <person name="Kraft C.L."/>
            <person name="Kravitz S."/>
            <person name="Kulp D."/>
            <person name="Lai Z."/>
            <person name="Lasko P."/>
            <person name="Lei Y."/>
            <person name="Levitsky A.A."/>
            <person name="Li J.H."/>
            <person name="Li Z."/>
            <person name="Liang Y."/>
            <person name="Lin X."/>
            <person name="Liu X."/>
            <person name="Mattei B."/>
            <person name="McIntosh T.C."/>
            <person name="McLeod M.P."/>
            <person name="McPherson D."/>
            <person name="Merkulov G."/>
            <person name="Milshina N.V."/>
            <person name="Mobarry C."/>
            <person name="Morris J."/>
            <person name="Moshrefi A."/>
            <person name="Mount S.M."/>
            <person name="Moy M."/>
            <person name="Murphy B."/>
            <person name="Murphy L."/>
            <person name="Muzny D.M."/>
            <person name="Nelson D.L."/>
            <person name="Nelson D.R."/>
            <person name="Nelson K.A."/>
            <person name="Nixon K."/>
            <person name="Nusskern D.R."/>
            <person name="Pacleb J.M."/>
            <person name="Palazzolo M."/>
            <person name="Pittman G.S."/>
            <person name="Pan S."/>
            <person name="Pollard J."/>
            <person name="Puri V."/>
            <person name="Reese M.G."/>
            <person name="Reinert K."/>
            <person name="Remington K."/>
            <person name="Saunders R.D.C."/>
            <person name="Scheeler F."/>
            <person name="Shen H."/>
            <person name="Shue B.C."/>
            <person name="Siden-Kiamos I."/>
            <person name="Simpson M."/>
            <person name="Skupski M.P."/>
            <person name="Smith T.J."/>
            <person name="Spier E."/>
            <person name="Spradling A.C."/>
            <person name="Stapleton M."/>
            <person name="Strong R."/>
            <person name="Sun E."/>
            <person name="Svirskas R."/>
            <person name="Tector C."/>
            <person name="Turner R."/>
            <person name="Venter E."/>
            <person name="Wang A.H."/>
            <person name="Wang X."/>
            <person name="Wang Z.-Y."/>
            <person name="Wassarman D.A."/>
            <person name="Weinstock G.M."/>
            <person name="Weissenbach J."/>
            <person name="Williams S.M."/>
            <person name="Woodage T."/>
            <person name="Worley K.C."/>
            <person name="Wu D."/>
            <person name="Yang S."/>
            <person name="Yao Q.A."/>
            <person name="Ye J."/>
            <person name="Yeh R.-F."/>
            <person name="Zaveri J.S."/>
            <person name="Zhan M."/>
            <person name="Zhang G."/>
            <person name="Zhao Q."/>
            <person name="Zheng L."/>
            <person name="Zheng X.H."/>
            <person name="Zhong F.N."/>
            <person name="Zhong W."/>
            <person name="Zhou X."/>
            <person name="Zhu S.C."/>
            <person name="Zhu X."/>
            <person name="Smith H.O."/>
            <person name="Gibbs R.A."/>
            <person name="Myers E.W."/>
            <person name="Rubin G.M."/>
            <person name="Venter J.C."/>
        </authorList>
    </citation>
    <scope>NUCLEOTIDE SEQUENCE [LARGE SCALE GENOMIC DNA]</scope>
    <source>
        <strain>Berkeley</strain>
    </source>
</reference>
<reference key="2">
    <citation type="journal article" date="2002" name="Genome Biol.">
        <title>Annotation of the Drosophila melanogaster euchromatic genome: a systematic review.</title>
        <authorList>
            <person name="Misra S."/>
            <person name="Crosby M.A."/>
            <person name="Mungall C.J."/>
            <person name="Matthews B.B."/>
            <person name="Campbell K.S."/>
            <person name="Hradecky P."/>
            <person name="Huang Y."/>
            <person name="Kaminker J.S."/>
            <person name="Millburn G.H."/>
            <person name="Prochnik S.E."/>
            <person name="Smith C.D."/>
            <person name="Tupy J.L."/>
            <person name="Whitfield E.J."/>
            <person name="Bayraktaroglu L."/>
            <person name="Berman B.P."/>
            <person name="Bettencourt B.R."/>
            <person name="Celniker S.E."/>
            <person name="de Grey A.D.N.J."/>
            <person name="Drysdale R.A."/>
            <person name="Harris N.L."/>
            <person name="Richter J."/>
            <person name="Russo S."/>
            <person name="Schroeder A.J."/>
            <person name="Shu S.Q."/>
            <person name="Stapleton M."/>
            <person name="Yamada C."/>
            <person name="Ashburner M."/>
            <person name="Gelbart W.M."/>
            <person name="Rubin G.M."/>
            <person name="Lewis S.E."/>
        </authorList>
    </citation>
    <scope>GENOME REANNOTATION</scope>
    <source>
        <strain>Berkeley</strain>
    </source>
</reference>
<reference key="3">
    <citation type="journal article" date="2002" name="Genome Biol.">
        <title>A Drosophila full-length cDNA resource.</title>
        <authorList>
            <person name="Stapleton M."/>
            <person name="Carlson J.W."/>
            <person name="Brokstein P."/>
            <person name="Yu C."/>
            <person name="Champe M."/>
            <person name="George R.A."/>
            <person name="Guarin H."/>
            <person name="Kronmiller B."/>
            <person name="Pacleb J.M."/>
            <person name="Park S."/>
            <person name="Wan K.H."/>
            <person name="Rubin G.M."/>
            <person name="Celniker S.E."/>
        </authorList>
    </citation>
    <scope>NUCLEOTIDE SEQUENCE [LARGE SCALE MRNA]</scope>
    <source>
        <strain>Berkeley</strain>
        <tissue>Testis</tissue>
    </source>
</reference>
<evidence type="ECO:0000250" key="1"/>
<evidence type="ECO:0000305" key="2"/>
<dbReference type="EC" id="1.14.-.-"/>
<dbReference type="EMBL" id="AE014134">
    <property type="protein sequence ID" value="AAF51242.3"/>
    <property type="molecule type" value="Genomic_DNA"/>
</dbReference>
<dbReference type="EMBL" id="AY089391">
    <property type="protein sequence ID" value="AAL90129.1"/>
    <property type="molecule type" value="mRNA"/>
</dbReference>
<dbReference type="RefSeq" id="NP_608689.2">
    <property type="nucleotide sequence ID" value="NM_134845.2"/>
</dbReference>
<dbReference type="SMR" id="P82713"/>
<dbReference type="BioGRID" id="59666">
    <property type="interactions" value="1"/>
</dbReference>
<dbReference type="STRING" id="7227.FBpp0077428"/>
<dbReference type="PaxDb" id="7227-FBpp0077428"/>
<dbReference type="EnsemblMetazoa" id="FBtr0077748">
    <property type="protein sequence ID" value="FBpp0077428"/>
    <property type="gene ID" value="FBgn0041337"/>
</dbReference>
<dbReference type="GeneID" id="33439"/>
<dbReference type="KEGG" id="dme:Dmel_CG18559"/>
<dbReference type="UCSC" id="CG18559-RA">
    <property type="organism name" value="d. melanogaster"/>
</dbReference>
<dbReference type="AGR" id="FB:FBgn0041337"/>
<dbReference type="CTD" id="33439"/>
<dbReference type="FlyBase" id="FBgn0041337">
    <property type="gene designation" value="Cyp309a2"/>
</dbReference>
<dbReference type="VEuPathDB" id="VectorBase:FBgn0041337"/>
<dbReference type="eggNOG" id="KOG0158">
    <property type="taxonomic scope" value="Eukaryota"/>
</dbReference>
<dbReference type="GeneTree" id="ENSGT00940000167276"/>
<dbReference type="HOGENOM" id="CLU_001570_5_2_1"/>
<dbReference type="InParanoid" id="P82713"/>
<dbReference type="OMA" id="VLPIYLY"/>
<dbReference type="OrthoDB" id="2789670at2759"/>
<dbReference type="PhylomeDB" id="P82713"/>
<dbReference type="BioGRID-ORCS" id="33439">
    <property type="hits" value="0 hits in 1 CRISPR screen"/>
</dbReference>
<dbReference type="GenomeRNAi" id="33439"/>
<dbReference type="PRO" id="PR:P82713"/>
<dbReference type="Proteomes" id="UP000000803">
    <property type="component" value="Chromosome 2L"/>
</dbReference>
<dbReference type="Bgee" id="FBgn0041337">
    <property type="expression patterns" value="Expressed in fat body cell in arthropod fat body and 15 other cell types or tissues"/>
</dbReference>
<dbReference type="GO" id="GO:0005789">
    <property type="term" value="C:endoplasmic reticulum membrane"/>
    <property type="evidence" value="ECO:0007669"/>
    <property type="project" value="UniProtKB-SubCell"/>
</dbReference>
<dbReference type="GO" id="GO:0020037">
    <property type="term" value="F:heme binding"/>
    <property type="evidence" value="ECO:0007669"/>
    <property type="project" value="InterPro"/>
</dbReference>
<dbReference type="GO" id="GO:0005506">
    <property type="term" value="F:iron ion binding"/>
    <property type="evidence" value="ECO:0007669"/>
    <property type="project" value="InterPro"/>
</dbReference>
<dbReference type="GO" id="GO:0004497">
    <property type="term" value="F:monooxygenase activity"/>
    <property type="evidence" value="ECO:0007669"/>
    <property type="project" value="UniProtKB-KW"/>
</dbReference>
<dbReference type="GO" id="GO:0016705">
    <property type="term" value="F:oxidoreductase activity, acting on paired donors, with incorporation or reduction of molecular oxygen"/>
    <property type="evidence" value="ECO:0007669"/>
    <property type="project" value="InterPro"/>
</dbReference>
<dbReference type="CDD" id="cd11056">
    <property type="entry name" value="CYP6-like"/>
    <property type="match status" value="1"/>
</dbReference>
<dbReference type="Gene3D" id="1.10.630.10">
    <property type="entry name" value="Cytochrome P450"/>
    <property type="match status" value="1"/>
</dbReference>
<dbReference type="InterPro" id="IPR001128">
    <property type="entry name" value="Cyt_P450"/>
</dbReference>
<dbReference type="InterPro" id="IPR017972">
    <property type="entry name" value="Cyt_P450_CS"/>
</dbReference>
<dbReference type="InterPro" id="IPR002401">
    <property type="entry name" value="Cyt_P450_E_grp-I"/>
</dbReference>
<dbReference type="InterPro" id="IPR036396">
    <property type="entry name" value="Cyt_P450_sf"/>
</dbReference>
<dbReference type="InterPro" id="IPR050476">
    <property type="entry name" value="Insect_CytP450_Detox"/>
</dbReference>
<dbReference type="PANTHER" id="PTHR24292">
    <property type="entry name" value="CYTOCHROME P450"/>
    <property type="match status" value="1"/>
</dbReference>
<dbReference type="PANTHER" id="PTHR24292:SF84">
    <property type="entry name" value="CYTOCHROME P450 28A5-RELATED"/>
    <property type="match status" value="1"/>
</dbReference>
<dbReference type="Pfam" id="PF00067">
    <property type="entry name" value="p450"/>
    <property type="match status" value="1"/>
</dbReference>
<dbReference type="PRINTS" id="PR00463">
    <property type="entry name" value="EP450I"/>
</dbReference>
<dbReference type="PRINTS" id="PR00385">
    <property type="entry name" value="P450"/>
</dbReference>
<dbReference type="SUPFAM" id="SSF48264">
    <property type="entry name" value="Cytochrome P450"/>
    <property type="match status" value="1"/>
</dbReference>
<dbReference type="PROSITE" id="PS00086">
    <property type="entry name" value="CYTOCHROME_P450"/>
    <property type="match status" value="1"/>
</dbReference>
<organism>
    <name type="scientific">Drosophila melanogaster</name>
    <name type="common">Fruit fly</name>
    <dbReference type="NCBI Taxonomy" id="7227"/>
    <lineage>
        <taxon>Eukaryota</taxon>
        <taxon>Metazoa</taxon>
        <taxon>Ecdysozoa</taxon>
        <taxon>Arthropoda</taxon>
        <taxon>Hexapoda</taxon>
        <taxon>Insecta</taxon>
        <taxon>Pterygota</taxon>
        <taxon>Neoptera</taxon>
        <taxon>Endopterygota</taxon>
        <taxon>Diptera</taxon>
        <taxon>Brachycera</taxon>
        <taxon>Muscomorpha</taxon>
        <taxon>Ephydroidea</taxon>
        <taxon>Drosophilidae</taxon>
        <taxon>Drosophila</taxon>
        <taxon>Sophophora</taxon>
    </lineage>
</organism>
<keyword id="KW-0256">Endoplasmic reticulum</keyword>
<keyword id="KW-0349">Heme</keyword>
<keyword id="KW-0408">Iron</keyword>
<keyword id="KW-0472">Membrane</keyword>
<keyword id="KW-0479">Metal-binding</keyword>
<keyword id="KW-0492">Microsome</keyword>
<keyword id="KW-0503">Monooxygenase</keyword>
<keyword id="KW-0560">Oxidoreductase</keyword>
<keyword id="KW-1185">Reference proteome</keyword>
<gene>
    <name type="primary">Cyp309a2</name>
    <name type="ORF">CG18559</name>
</gene>
<accession>P82713</accession>
<accession>Q8T422</accession>
<accession>Q9VQD3</accession>
<name>CP392_DROME</name>
<sequence>MMPERFSFDFRPIDQYWTRAKGACSNTKRGNMYILASLALILLHLLVLPIYLYLTWHHKYWRKRGLVTARPLTLLGTYPGLLTRKSNLVFDVQKIYDKYKGKHRAVGVFVTRQPQILVLDPELAHEVLVSNFRCYKDSLQSSYLRHAKWDKYARLNPFWASGQSWRRLRTDAQAGISGSRLRQAYNIWEQGGQMLTEYMTQQVAEKNNILETRDLCFRYTAHVMADFIWGIDAGTLTRPMEQPNKVQEMASKWTSYAFYMLTLFMATIVAPCSRLLLRFRFYPKETDEFFSNLTKESIELRLKAGDSTRTDYLSHLLQLRDQKQATHDDLVGHALTVMLDGYDTSGTALLHALYYLAENPAVQQKLRVEILSCMASEKSLDFEKLSSLQYLEQVIYESLRLSSLIPQYTKVCTLPTVIRLSESKSLDVEVGMTIMIPNYQFHHDKQYFPEPEAFKPERFDNGAYQELMRKGIFLPFSDGPRICMGVPLAMLTLKSALVHILSNFQVVRGRDRLIPKGDSGFGVVLQGDVNLEYRRFFR</sequence>
<feature type="chain" id="PRO_0000052319" description="Probable cytochrome P450 309a2">
    <location>
        <begin position="1"/>
        <end position="538"/>
    </location>
</feature>
<feature type="binding site" description="axial binding residue" evidence="1">
    <location>
        <position position="483"/>
    </location>
    <ligand>
        <name>heme</name>
        <dbReference type="ChEBI" id="CHEBI:30413"/>
    </ligand>
    <ligandPart>
        <name>Fe</name>
        <dbReference type="ChEBI" id="CHEBI:18248"/>
    </ligandPart>
</feature>
<feature type="sequence conflict" description="In Ref. 3; AAL90129." evidence="2" ref="3">
    <original>S</original>
    <variation>G</variation>
    <location>
        <position position="130"/>
    </location>
</feature>
<feature type="sequence conflict" description="In Ref. 3; AAL90129." evidence="2" ref="3">
    <original>M</original>
    <variation>L</variation>
    <location>
        <position position="240"/>
    </location>
</feature>
<feature type="sequence conflict" description="In Ref. 3; AAL90129." evidence="2" ref="3">
    <original>E</original>
    <variation>Q</variation>
    <location>
        <position position="248"/>
    </location>
</feature>
<feature type="sequence conflict" description="In Ref. 3; AAL90129." evidence="2" ref="3">
    <original>C</original>
    <variation>S</variation>
    <location>
        <position position="373"/>
    </location>
</feature>
<feature type="sequence conflict" description="In Ref. 3; AAL90129." evidence="2" ref="3">
    <original>R</original>
    <variation>K</variation>
    <location>
        <position position="419"/>
    </location>
</feature>